<name>MRAY_HERAR</name>
<accession>A4G8U1</accession>
<feature type="chain" id="PRO_1000002990" description="Phospho-N-acetylmuramoyl-pentapeptide-transferase">
    <location>
        <begin position="1"/>
        <end position="389"/>
    </location>
</feature>
<feature type="transmembrane region" description="Helical" evidence="1">
    <location>
        <begin position="21"/>
        <end position="41"/>
    </location>
</feature>
<feature type="transmembrane region" description="Helical" evidence="1">
    <location>
        <begin position="70"/>
        <end position="90"/>
    </location>
</feature>
<feature type="transmembrane region" description="Helical" evidence="1">
    <location>
        <begin position="97"/>
        <end position="117"/>
    </location>
</feature>
<feature type="transmembrane region" description="Helical" evidence="1">
    <location>
        <begin position="134"/>
        <end position="154"/>
    </location>
</feature>
<feature type="transmembrane region" description="Helical" evidence="1">
    <location>
        <begin position="189"/>
        <end position="209"/>
    </location>
</feature>
<feature type="transmembrane region" description="Helical" evidence="1">
    <location>
        <begin position="222"/>
        <end position="242"/>
    </location>
</feature>
<feature type="transmembrane region" description="Helical" evidence="1">
    <location>
        <begin position="259"/>
        <end position="279"/>
    </location>
</feature>
<feature type="transmembrane region" description="Helical" evidence="1">
    <location>
        <begin position="286"/>
        <end position="306"/>
    </location>
</feature>
<feature type="transmembrane region" description="Helical" evidence="1">
    <location>
        <begin position="311"/>
        <end position="331"/>
    </location>
</feature>
<feature type="transmembrane region" description="Helical" evidence="1">
    <location>
        <begin position="366"/>
        <end position="386"/>
    </location>
</feature>
<sequence length="389" mass="42713">MLLWLAQHFQDEIGPLRVFNFITFRAVFATLTALAIGLFFGPMVIRMLQRLKVGQAVRTDGPQTHLIKSGTPTMGGALILLAIGVATLLWTDLSNRFVWVVLIVTLGFGAVGWVDDYRKVVYKDPKGMASREKYMWQSIIGLFAAVYLAFSVSAPSNSQFLDLFVAWVQSGFSMDLPPKADLIVPFFKTISYPLGVWGFIALTYFVIVGTSNAVNLTDGLDGLAIMPTVMVGTALGLFAYLTGSATYAKYLFIPHIPGAGELIIFCGAMAGAGLAFLWFNAHPAQVFMGDVGALALGGALGTIAVIVRQEIVLFIMGGVFVVETLSVMIQVAYFKYTKMRTGTGRRILLMAPLHHHFEQKGWKETQVVVRFWIITMMLVLFGLSTLKLR</sequence>
<evidence type="ECO:0000255" key="1">
    <source>
        <dbReference type="HAMAP-Rule" id="MF_00038"/>
    </source>
</evidence>
<protein>
    <recommendedName>
        <fullName evidence="1">Phospho-N-acetylmuramoyl-pentapeptide-transferase</fullName>
        <ecNumber evidence="1">2.7.8.13</ecNumber>
    </recommendedName>
    <alternativeName>
        <fullName evidence="1">UDP-MurNAc-pentapeptide phosphotransferase</fullName>
    </alternativeName>
</protein>
<organism>
    <name type="scientific">Herminiimonas arsenicoxydans</name>
    <dbReference type="NCBI Taxonomy" id="204773"/>
    <lineage>
        <taxon>Bacteria</taxon>
        <taxon>Pseudomonadati</taxon>
        <taxon>Pseudomonadota</taxon>
        <taxon>Betaproteobacteria</taxon>
        <taxon>Burkholderiales</taxon>
        <taxon>Oxalobacteraceae</taxon>
        <taxon>Herminiimonas</taxon>
    </lineage>
</organism>
<dbReference type="EC" id="2.7.8.13" evidence="1"/>
<dbReference type="EMBL" id="CU207211">
    <property type="protein sequence ID" value="CAL62928.1"/>
    <property type="molecule type" value="Genomic_DNA"/>
</dbReference>
<dbReference type="SMR" id="A4G8U1"/>
<dbReference type="STRING" id="204773.HEAR2814"/>
<dbReference type="KEGG" id="har:HEAR2814"/>
<dbReference type="eggNOG" id="COG0472">
    <property type="taxonomic scope" value="Bacteria"/>
</dbReference>
<dbReference type="HOGENOM" id="CLU_023982_0_0_4"/>
<dbReference type="OrthoDB" id="9805475at2"/>
<dbReference type="UniPathway" id="UPA00219"/>
<dbReference type="Proteomes" id="UP000006697">
    <property type="component" value="Chromosome"/>
</dbReference>
<dbReference type="GO" id="GO:0005886">
    <property type="term" value="C:plasma membrane"/>
    <property type="evidence" value="ECO:0007669"/>
    <property type="project" value="UniProtKB-SubCell"/>
</dbReference>
<dbReference type="GO" id="GO:0046872">
    <property type="term" value="F:metal ion binding"/>
    <property type="evidence" value="ECO:0007669"/>
    <property type="project" value="UniProtKB-KW"/>
</dbReference>
<dbReference type="GO" id="GO:0008963">
    <property type="term" value="F:phospho-N-acetylmuramoyl-pentapeptide-transferase activity"/>
    <property type="evidence" value="ECO:0007669"/>
    <property type="project" value="UniProtKB-UniRule"/>
</dbReference>
<dbReference type="GO" id="GO:0051992">
    <property type="term" value="F:UDP-N-acetylmuramoyl-L-alanyl-D-glutamyl-meso-2,6-diaminopimelyl-D-alanyl-D-alanine:undecaprenyl-phosphate transferase activity"/>
    <property type="evidence" value="ECO:0007669"/>
    <property type="project" value="RHEA"/>
</dbReference>
<dbReference type="GO" id="GO:0051301">
    <property type="term" value="P:cell division"/>
    <property type="evidence" value="ECO:0007669"/>
    <property type="project" value="UniProtKB-KW"/>
</dbReference>
<dbReference type="GO" id="GO:0071555">
    <property type="term" value="P:cell wall organization"/>
    <property type="evidence" value="ECO:0007669"/>
    <property type="project" value="UniProtKB-KW"/>
</dbReference>
<dbReference type="GO" id="GO:0009252">
    <property type="term" value="P:peptidoglycan biosynthetic process"/>
    <property type="evidence" value="ECO:0007669"/>
    <property type="project" value="UniProtKB-UniRule"/>
</dbReference>
<dbReference type="GO" id="GO:0008360">
    <property type="term" value="P:regulation of cell shape"/>
    <property type="evidence" value="ECO:0007669"/>
    <property type="project" value="UniProtKB-KW"/>
</dbReference>
<dbReference type="CDD" id="cd06852">
    <property type="entry name" value="GT_MraY"/>
    <property type="match status" value="1"/>
</dbReference>
<dbReference type="HAMAP" id="MF_00038">
    <property type="entry name" value="MraY"/>
    <property type="match status" value="1"/>
</dbReference>
<dbReference type="InterPro" id="IPR000715">
    <property type="entry name" value="Glycosyl_transferase_4"/>
</dbReference>
<dbReference type="InterPro" id="IPR003524">
    <property type="entry name" value="PNAcMuramoyl-5peptid_Trfase"/>
</dbReference>
<dbReference type="InterPro" id="IPR018480">
    <property type="entry name" value="PNAcMuramoyl-5peptid_Trfase_CS"/>
</dbReference>
<dbReference type="NCBIfam" id="TIGR00445">
    <property type="entry name" value="mraY"/>
    <property type="match status" value="1"/>
</dbReference>
<dbReference type="PANTHER" id="PTHR22926">
    <property type="entry name" value="PHOSPHO-N-ACETYLMURAMOYL-PENTAPEPTIDE-TRANSFERASE"/>
    <property type="match status" value="1"/>
</dbReference>
<dbReference type="PANTHER" id="PTHR22926:SF5">
    <property type="entry name" value="PHOSPHO-N-ACETYLMURAMOYL-PENTAPEPTIDE-TRANSFERASE HOMOLOG"/>
    <property type="match status" value="1"/>
</dbReference>
<dbReference type="Pfam" id="PF00953">
    <property type="entry name" value="Glycos_transf_4"/>
    <property type="match status" value="1"/>
</dbReference>
<dbReference type="Pfam" id="PF10555">
    <property type="entry name" value="MraY_sig1"/>
    <property type="match status" value="1"/>
</dbReference>
<dbReference type="PROSITE" id="PS01347">
    <property type="entry name" value="MRAY_1"/>
    <property type="match status" value="1"/>
</dbReference>
<dbReference type="PROSITE" id="PS01348">
    <property type="entry name" value="MRAY_2"/>
    <property type="match status" value="1"/>
</dbReference>
<reference key="1">
    <citation type="journal article" date="2007" name="PLoS Genet.">
        <title>A tale of two oxidation states: bacterial colonization of arsenic-rich environments.</title>
        <authorList>
            <person name="Muller D."/>
            <person name="Medigue C."/>
            <person name="Koechler S."/>
            <person name="Barbe V."/>
            <person name="Barakat M."/>
            <person name="Talla E."/>
            <person name="Bonnefoy V."/>
            <person name="Krin E."/>
            <person name="Arsene-Ploetze F."/>
            <person name="Carapito C."/>
            <person name="Chandler M."/>
            <person name="Cournoyer B."/>
            <person name="Cruveiller S."/>
            <person name="Dossat C."/>
            <person name="Duval S."/>
            <person name="Heymann M."/>
            <person name="Leize E."/>
            <person name="Lieutaud A."/>
            <person name="Lievremont D."/>
            <person name="Makita Y."/>
            <person name="Mangenot S."/>
            <person name="Nitschke W."/>
            <person name="Ortet P."/>
            <person name="Perdrial N."/>
            <person name="Schoepp B."/>
            <person name="Siguier P."/>
            <person name="Simeonova D.D."/>
            <person name="Rouy Z."/>
            <person name="Segurens B."/>
            <person name="Turlin E."/>
            <person name="Vallenet D."/>
            <person name="van Dorsselaer A."/>
            <person name="Weiss S."/>
            <person name="Weissenbach J."/>
            <person name="Lett M.-C."/>
            <person name="Danchin A."/>
            <person name="Bertin P.N."/>
        </authorList>
    </citation>
    <scope>NUCLEOTIDE SEQUENCE [LARGE SCALE GENOMIC DNA]</scope>
    <source>
        <strain>ULPAs1</strain>
    </source>
</reference>
<keyword id="KW-0131">Cell cycle</keyword>
<keyword id="KW-0132">Cell division</keyword>
<keyword id="KW-0997">Cell inner membrane</keyword>
<keyword id="KW-1003">Cell membrane</keyword>
<keyword id="KW-0133">Cell shape</keyword>
<keyword id="KW-0961">Cell wall biogenesis/degradation</keyword>
<keyword id="KW-0460">Magnesium</keyword>
<keyword id="KW-0472">Membrane</keyword>
<keyword id="KW-0479">Metal-binding</keyword>
<keyword id="KW-0573">Peptidoglycan synthesis</keyword>
<keyword id="KW-1185">Reference proteome</keyword>
<keyword id="KW-0808">Transferase</keyword>
<keyword id="KW-0812">Transmembrane</keyword>
<keyword id="KW-1133">Transmembrane helix</keyword>
<proteinExistence type="inferred from homology"/>
<gene>
    <name evidence="1" type="primary">mraY</name>
    <name type="ordered locus">HEAR2814</name>
</gene>
<comment type="function">
    <text evidence="1">Catalyzes the initial step of the lipid cycle reactions in the biosynthesis of the cell wall peptidoglycan: transfers peptidoglycan precursor phospho-MurNAc-pentapeptide from UDP-MurNAc-pentapeptide onto the lipid carrier undecaprenyl phosphate, yielding undecaprenyl-pyrophosphoryl-MurNAc-pentapeptide, known as lipid I.</text>
</comment>
<comment type="catalytic activity">
    <reaction evidence="1">
        <text>UDP-N-acetyl-alpha-D-muramoyl-L-alanyl-gamma-D-glutamyl-meso-2,6-diaminopimeloyl-D-alanyl-D-alanine + di-trans,octa-cis-undecaprenyl phosphate = di-trans,octa-cis-undecaprenyl diphospho-N-acetyl-alpha-D-muramoyl-L-alanyl-D-glutamyl-meso-2,6-diaminopimeloyl-D-alanyl-D-alanine + UMP</text>
        <dbReference type="Rhea" id="RHEA:28386"/>
        <dbReference type="ChEBI" id="CHEBI:57865"/>
        <dbReference type="ChEBI" id="CHEBI:60392"/>
        <dbReference type="ChEBI" id="CHEBI:61386"/>
        <dbReference type="ChEBI" id="CHEBI:61387"/>
        <dbReference type="EC" id="2.7.8.13"/>
    </reaction>
</comment>
<comment type="cofactor">
    <cofactor evidence="1">
        <name>Mg(2+)</name>
        <dbReference type="ChEBI" id="CHEBI:18420"/>
    </cofactor>
</comment>
<comment type="pathway">
    <text evidence="1">Cell wall biogenesis; peptidoglycan biosynthesis.</text>
</comment>
<comment type="subcellular location">
    <subcellularLocation>
        <location evidence="1">Cell inner membrane</location>
        <topology evidence="1">Multi-pass membrane protein</topology>
    </subcellularLocation>
</comment>
<comment type="similarity">
    <text evidence="1">Belongs to the glycosyltransferase 4 family. MraY subfamily.</text>
</comment>